<proteinExistence type="evidence at protein level"/>
<organism>
    <name type="scientific">Salmonella typhimurium (strain LT2 / SGSC1412 / ATCC 700720)</name>
    <dbReference type="NCBI Taxonomy" id="99287"/>
    <lineage>
        <taxon>Bacteria</taxon>
        <taxon>Pseudomonadati</taxon>
        <taxon>Pseudomonadota</taxon>
        <taxon>Gammaproteobacteria</taxon>
        <taxon>Enterobacterales</taxon>
        <taxon>Enterobacteriaceae</taxon>
        <taxon>Salmonella</taxon>
    </lineage>
</organism>
<feature type="chain" id="PRO_0000134698" description="Cobalt transport protein CbiN">
    <location>
        <begin position="1"/>
        <end position="93"/>
    </location>
</feature>
<feature type="transmembrane region" description="Helical" evidence="1">
    <location>
        <begin position="5"/>
        <end position="25"/>
    </location>
</feature>
<feature type="transmembrane region" description="Helical" evidence="1">
    <location>
        <begin position="63"/>
        <end position="83"/>
    </location>
</feature>
<comment type="function">
    <text evidence="2">Part of the energy-coupling factor (ECF) transporter complex CbiMNOQ involved in cobalt import. The complex confers cobalt uptake upon expression in E.coli; can also transport nickel with a very low affinity.</text>
</comment>
<comment type="pathway">
    <text>Cofactor biosynthesis; adenosylcobalamin biosynthesis.</text>
</comment>
<comment type="subunit">
    <text evidence="2">Forms an energy-coupling factor (ECF) transporter complex composed of an ATP-binding protein (A component, CbiO), a transmembrane protein (T component, CbiQ) and 2 possible substrate-capture proteins (S components, CbiM and CbiN) of unknown stoichimetry. Expression of just CbiMN in E.coli confers some cobalt uptake.</text>
</comment>
<comment type="subcellular location">
    <subcellularLocation>
        <location evidence="3">Cell inner membrane</location>
        <topology evidence="3">Multi-pass membrane protein</topology>
    </subcellularLocation>
</comment>
<comment type="similarity">
    <text evidence="3">Belongs to the CbiN family.</text>
</comment>
<reference key="1">
    <citation type="journal article" date="1993" name="J. Bacteriol.">
        <title>Characterization of the cobalamin (vitamin B12) biosynthetic genes of Salmonella typhimurium.</title>
        <authorList>
            <person name="Roth J.R."/>
            <person name="Lawrence J.G."/>
            <person name="Rubenfield M."/>
            <person name="Kieffer-Higgins S."/>
            <person name="Church G.M."/>
        </authorList>
    </citation>
    <scope>NUCLEOTIDE SEQUENCE [GENOMIC DNA]</scope>
    <source>
        <strain>LT2</strain>
    </source>
</reference>
<reference key="2">
    <citation type="journal article" date="2001" name="Nature">
        <title>Complete genome sequence of Salmonella enterica serovar Typhimurium LT2.</title>
        <authorList>
            <person name="McClelland M."/>
            <person name="Sanderson K.E."/>
            <person name="Spieth J."/>
            <person name="Clifton S.W."/>
            <person name="Latreille P."/>
            <person name="Courtney L."/>
            <person name="Porwollik S."/>
            <person name="Ali J."/>
            <person name="Dante M."/>
            <person name="Du F."/>
            <person name="Hou S."/>
            <person name="Layman D."/>
            <person name="Leonard S."/>
            <person name="Nguyen C."/>
            <person name="Scott K."/>
            <person name="Holmes A."/>
            <person name="Grewal N."/>
            <person name="Mulvaney E."/>
            <person name="Ryan E."/>
            <person name="Sun H."/>
            <person name="Florea L."/>
            <person name="Miller W."/>
            <person name="Stoneking T."/>
            <person name="Nhan M."/>
            <person name="Waterston R."/>
            <person name="Wilson R.K."/>
        </authorList>
    </citation>
    <scope>NUCLEOTIDE SEQUENCE [LARGE SCALE GENOMIC DNA]</scope>
    <source>
        <strain>LT2 / SGSC1412 / ATCC 700720</strain>
    </source>
</reference>
<reference key="3">
    <citation type="journal article" date="2006" name="J. Bacteriol.">
        <title>Comparative and functional genomic analysis of prokaryotic nickel and cobalt uptake transporters: evidence for a novel group of ATP-binding cassette transporters.</title>
        <authorList>
            <person name="Rodionov D.A."/>
            <person name="Hebbeln P."/>
            <person name="Gelfand M.S."/>
            <person name="Eitinger T."/>
        </authorList>
    </citation>
    <scope>FUNCTION IN COBALT TRANSPORT</scope>
    <scope>SUBSTRATES</scope>
    <scope>SUBUNIT</scope>
    <scope>EXPRESSION IN E.COLI</scope>
    <source>
        <strain>LT2 / SGSC1412 / ATCC 700720</strain>
    </source>
</reference>
<sequence length="93" mass="10269">MKKTLMLLAMVVALVILPFFINHGGEYGGSDGEAESQIQAIAPQYKPWFQPLYEPASGEIESLLFTLQGSLGAAVIFYILGYCKGKQRRDDRA</sequence>
<gene>
    <name type="primary">cbiN</name>
    <name type="ordered locus">STM2022</name>
</gene>
<protein>
    <recommendedName>
        <fullName>Cobalt transport protein CbiN</fullName>
    </recommendedName>
    <alternativeName>
        <fullName>Energy-coupling factor transporter probable substrate-capture protein CbiN</fullName>
        <shortName>ECF transporter S component CbiN</shortName>
    </alternativeName>
</protein>
<evidence type="ECO:0000255" key="1"/>
<evidence type="ECO:0000269" key="2">
    <source>
    </source>
</evidence>
<evidence type="ECO:0000305" key="3"/>
<keyword id="KW-0997">Cell inner membrane</keyword>
<keyword id="KW-1003">Cell membrane</keyword>
<keyword id="KW-0169">Cobalamin biosynthesis</keyword>
<keyword id="KW-0170">Cobalt</keyword>
<keyword id="KW-0171">Cobalt transport</keyword>
<keyword id="KW-0406">Ion transport</keyword>
<keyword id="KW-0472">Membrane</keyword>
<keyword id="KW-1185">Reference proteome</keyword>
<keyword id="KW-0812">Transmembrane</keyword>
<keyword id="KW-1133">Transmembrane helix</keyword>
<keyword id="KW-0813">Transport</keyword>
<accession>Q05595</accession>
<dbReference type="EMBL" id="L12006">
    <property type="protein sequence ID" value="AAA27265.1"/>
    <property type="molecule type" value="Genomic_DNA"/>
</dbReference>
<dbReference type="EMBL" id="AE006468">
    <property type="protein sequence ID" value="AAL20926.1"/>
    <property type="molecule type" value="Genomic_DNA"/>
</dbReference>
<dbReference type="RefSeq" id="NP_460967.1">
    <property type="nucleotide sequence ID" value="NC_003197.2"/>
</dbReference>
<dbReference type="RefSeq" id="WP_000753212.1">
    <property type="nucleotide sequence ID" value="NC_003197.2"/>
</dbReference>
<dbReference type="STRING" id="99287.STM2022"/>
<dbReference type="TCDB" id="3.A.1.23.6">
    <property type="family name" value="the atp-binding cassette (abc) superfamily"/>
</dbReference>
<dbReference type="PaxDb" id="99287-STM2022"/>
<dbReference type="GeneID" id="1253543"/>
<dbReference type="KEGG" id="stm:STM2022"/>
<dbReference type="PATRIC" id="fig|99287.12.peg.2144"/>
<dbReference type="HOGENOM" id="CLU_136197_2_0_6"/>
<dbReference type="OMA" id="PWFQPLW"/>
<dbReference type="PhylomeDB" id="Q05595"/>
<dbReference type="BioCyc" id="SENT99287:STM2022-MONOMER"/>
<dbReference type="UniPathway" id="UPA00148"/>
<dbReference type="Proteomes" id="UP000001014">
    <property type="component" value="Chromosome"/>
</dbReference>
<dbReference type="GO" id="GO:0043190">
    <property type="term" value="C:ATP-binding cassette (ABC) transporter complex"/>
    <property type="evidence" value="ECO:0000314"/>
    <property type="project" value="UniProtKB"/>
</dbReference>
<dbReference type="GO" id="GO:0015087">
    <property type="term" value="F:cobalt ion transmembrane transporter activity"/>
    <property type="evidence" value="ECO:0007669"/>
    <property type="project" value="UniProtKB-UniRule"/>
</dbReference>
<dbReference type="GO" id="GO:0009236">
    <property type="term" value="P:cobalamin biosynthetic process"/>
    <property type="evidence" value="ECO:0007669"/>
    <property type="project" value="UniProtKB-UniRule"/>
</dbReference>
<dbReference type="GO" id="GO:0006824">
    <property type="term" value="P:cobalt ion transport"/>
    <property type="evidence" value="ECO:0000314"/>
    <property type="project" value="UniProtKB"/>
</dbReference>
<dbReference type="HAMAP" id="MF_00330">
    <property type="entry name" value="CbiN"/>
    <property type="match status" value="1"/>
</dbReference>
<dbReference type="InterPro" id="IPR003705">
    <property type="entry name" value="CbiN"/>
</dbReference>
<dbReference type="NCBIfam" id="TIGR01165">
    <property type="entry name" value="cbiN"/>
    <property type="match status" value="1"/>
</dbReference>
<dbReference type="NCBIfam" id="NF002780">
    <property type="entry name" value="PRK02898.1"/>
    <property type="match status" value="1"/>
</dbReference>
<dbReference type="PANTHER" id="PTHR38662">
    <property type="entry name" value="COBALT TRANSPORT PROTEIN CBIN"/>
    <property type="match status" value="1"/>
</dbReference>
<dbReference type="PANTHER" id="PTHR38662:SF1">
    <property type="entry name" value="COBALT TRANSPORT PROTEIN CBIN"/>
    <property type="match status" value="1"/>
</dbReference>
<dbReference type="Pfam" id="PF02553">
    <property type="entry name" value="CbiN"/>
    <property type="match status" value="1"/>
</dbReference>
<name>CBIN_SALTY</name>